<sequence>MPTGDFDSKPSWADQVEEEGEDDKCVTSELLKGIPLPTGDTSPEPELLPGDPLPPPKEVINGNIKTVTEYKIEEDGKKFKIVRTFRIETRKASKAVARRKNWKKFGNSEFDPPGPNVATTTVSDDVSMTFITSKEDLNCQEEEDPMNKLKGQKIVSCRICKGDHWTTRCPYKDTLGPMQKELAEQLGLSTGEKEKLPGELEPVQAAQSKTGKYVPPSLRDGASRRGESMQPNRRADDNATIRVTNLSEDTRETDLQELFRPFGSISRIYLAKDKTTGQSKGFAFISFHRREDAARAIAGVSGFGYDHLILNVEWAKPSTN</sequence>
<keyword id="KW-0963">Cytoplasm</keyword>
<keyword id="KW-0396">Initiation factor</keyword>
<keyword id="KW-0539">Nucleus</keyword>
<keyword id="KW-0597">Phosphoprotein</keyword>
<keyword id="KW-0648">Protein biosynthesis</keyword>
<keyword id="KW-1185">Reference proteome</keyword>
<keyword id="KW-0694">RNA-binding</keyword>
<reference key="1">
    <citation type="submission" date="1996-09" db="EMBL/GenBank/DDBJ databases">
        <authorList>
            <person name="Asano K."/>
            <person name="Hershey J.W.B."/>
            <person name="Hinnebusch A.G."/>
        </authorList>
    </citation>
    <scope>NUCLEOTIDE SEQUENCE [MRNA]</scope>
</reference>
<reference key="2">
    <citation type="submission" date="1998-11" db="EMBL/GenBank/DDBJ databases">
        <title>5'-AMP-activated protein kinase subunit beta interacts with the p42 subunit of translation initiation factor eIF3.</title>
        <authorList>
            <person name="Valentijn L.J."/>
            <person name="Hoff E.I."/>
            <person name="Baas F."/>
        </authorList>
    </citation>
    <scope>NUCLEOTIDE SEQUENCE [MRNA]</scope>
    <source>
        <strain>CD-1</strain>
    </source>
</reference>
<reference key="3">
    <citation type="journal article" date="2004" name="Genome Res.">
        <title>The status, quality, and expansion of the NIH full-length cDNA project: the Mammalian Gene Collection (MGC).</title>
        <authorList>
            <consortium name="The MGC Project Team"/>
        </authorList>
    </citation>
    <scope>NUCLEOTIDE SEQUENCE [LARGE SCALE MRNA]</scope>
</reference>
<reference key="4">
    <citation type="journal article" date="2004" name="Mol. Cell. Proteomics">
        <title>Phosphoproteomic analysis of the developing mouse brain.</title>
        <authorList>
            <person name="Ballif B.A."/>
            <person name="Villen J."/>
            <person name="Beausoleil S.A."/>
            <person name="Schwartz D."/>
            <person name="Gygi S.P."/>
        </authorList>
    </citation>
    <scope>IDENTIFICATION BY MASS SPECTROMETRY [LARGE SCALE ANALYSIS]</scope>
    <source>
        <tissue>Embryonic brain</tissue>
    </source>
</reference>
<reference key="5">
    <citation type="journal article" date="2007" name="EMBO J.">
        <title>Reconstitution reveals the functional core of mammalian eIF3.</title>
        <authorList>
            <person name="Masutani M."/>
            <person name="Sonenberg N."/>
            <person name="Yokoyama S."/>
            <person name="Imataka H."/>
        </authorList>
    </citation>
    <scope>FUNCTION</scope>
    <scope>CHARACTERIZATION OF THE EIF-3 COMPLEX</scope>
    <scope>IDENTIFICATION IN THE EIF-3 COMPLEX</scope>
    <scope>IDENTIFICATION BY MASS SPECTROMETRY</scope>
</reference>
<reference key="6">
    <citation type="journal article" date="2007" name="Proc. Natl. Acad. Sci. U.S.A.">
        <title>Large-scale phosphorylation analysis of mouse liver.</title>
        <authorList>
            <person name="Villen J."/>
            <person name="Beausoleil S.A."/>
            <person name="Gerber S.A."/>
            <person name="Gygi S.P."/>
        </authorList>
    </citation>
    <scope>IDENTIFICATION BY MASS SPECTROMETRY [LARGE SCALE ANALYSIS]</scope>
    <source>
        <tissue>Liver</tissue>
    </source>
</reference>
<reference key="7">
    <citation type="journal article" date="2009" name="Immunity">
        <title>The phagosomal proteome in interferon-gamma-activated macrophages.</title>
        <authorList>
            <person name="Trost M."/>
            <person name="English L."/>
            <person name="Lemieux S."/>
            <person name="Courcelles M."/>
            <person name="Desjardins M."/>
            <person name="Thibault P."/>
        </authorList>
    </citation>
    <scope>IDENTIFICATION BY MASS SPECTROMETRY [LARGE SCALE ANALYSIS]</scope>
</reference>
<reference key="8">
    <citation type="journal article" date="2009" name="Mol. Cell. Proteomics">
        <title>Large scale localization of protein phosphorylation by use of electron capture dissociation mass spectrometry.</title>
        <authorList>
            <person name="Sweet S.M."/>
            <person name="Bailey C.M."/>
            <person name="Cunningham D.L."/>
            <person name="Heath J.K."/>
            <person name="Cooper H.J."/>
        </authorList>
    </citation>
    <scope>IDENTIFICATION BY MASS SPECTROMETRY [LARGE SCALE ANALYSIS]</scope>
    <source>
        <tissue>Embryonic fibroblast</tissue>
    </source>
</reference>
<reference key="9">
    <citation type="journal article" date="2010" name="Cell">
        <title>A tissue-specific atlas of mouse protein phosphorylation and expression.</title>
        <authorList>
            <person name="Huttlin E.L."/>
            <person name="Jedrychowski M.P."/>
            <person name="Elias J.E."/>
            <person name="Goswami T."/>
            <person name="Rad R."/>
            <person name="Beausoleil S.A."/>
            <person name="Villen J."/>
            <person name="Haas W."/>
            <person name="Sowa M.E."/>
            <person name="Gygi S.P."/>
        </authorList>
    </citation>
    <scope>PHOSPHORYLATION [LARGE SCALE ANALYSIS] AT THR-41 AND SER-42</scope>
    <scope>IDENTIFICATION BY MASS SPECTROMETRY [LARGE SCALE ANALYSIS]</scope>
    <source>
        <tissue>Brain</tissue>
        <tissue>Brown adipose tissue</tissue>
        <tissue>Heart</tissue>
        <tissue>Kidney</tissue>
        <tissue>Liver</tissue>
        <tissue>Lung</tissue>
        <tissue>Pancreas</tissue>
        <tissue>Spleen</tissue>
        <tissue>Testis</tissue>
    </source>
</reference>
<reference key="10">
    <citation type="journal article" date="2015" name="Mol. Cell. Biol.">
        <title>The DHX33 RNA Helicase Promotes mRNA Translation Initiation.</title>
        <authorList>
            <person name="Zhang Y."/>
            <person name="You J."/>
            <person name="Wang X."/>
            <person name="Weber J."/>
        </authorList>
    </citation>
    <scope>INTERACTION WITH DHX33</scope>
</reference>
<accession>Q9Z1D1</accession>
<accession>Q9R079</accession>
<proteinExistence type="evidence at protein level"/>
<evidence type="ECO:0000250" key="1">
    <source>
        <dbReference type="UniProtKB" id="O75821"/>
    </source>
</evidence>
<evidence type="ECO:0000255" key="2">
    <source>
        <dbReference type="HAMAP-Rule" id="MF_03006"/>
    </source>
</evidence>
<evidence type="ECO:0000256" key="3">
    <source>
        <dbReference type="SAM" id="MobiDB-lite"/>
    </source>
</evidence>
<evidence type="ECO:0000269" key="4">
    <source>
    </source>
</evidence>
<evidence type="ECO:0000269" key="5">
    <source>
    </source>
</evidence>
<evidence type="ECO:0000305" key="6"/>
<evidence type="ECO:0007744" key="7">
    <source>
    </source>
</evidence>
<protein>
    <recommendedName>
        <fullName evidence="2">Eukaryotic translation initiation factor 3 subunit G</fullName>
        <shortName evidence="2">eIF3g</shortName>
    </recommendedName>
    <alternativeName>
        <fullName evidence="2">Eukaryotic translation initiation factor 3 RNA-binding subunit</fullName>
        <shortName evidence="2">eIF-3 RNA-binding subunit</shortName>
    </alternativeName>
    <alternativeName>
        <fullName evidence="2">Eukaryotic translation initiation factor 3 subunit 4</fullName>
    </alternativeName>
    <alternativeName>
        <fullName evidence="2">eIF-3-delta</fullName>
    </alternativeName>
    <alternativeName>
        <fullName evidence="2">eIF3 p42</fullName>
    </alternativeName>
    <alternativeName>
        <fullName evidence="2">eIF3 p44</fullName>
    </alternativeName>
</protein>
<feature type="chain" id="PRO_0000123511" description="Eukaryotic translation initiation factor 3 subunit G">
    <location>
        <begin position="1"/>
        <end position="320"/>
    </location>
</feature>
<feature type="domain" description="RRM" evidence="2">
    <location>
        <begin position="239"/>
        <end position="317"/>
    </location>
</feature>
<feature type="region of interest" description="Disordered" evidence="3">
    <location>
        <begin position="1"/>
        <end position="60"/>
    </location>
</feature>
<feature type="region of interest" description="Disordered" evidence="3">
    <location>
        <begin position="204"/>
        <end position="233"/>
    </location>
</feature>
<feature type="compositionally biased region" description="Basic and acidic residues" evidence="3">
    <location>
        <begin position="221"/>
        <end position="233"/>
    </location>
</feature>
<feature type="modified residue" description="Phosphoserine" evidence="1">
    <location>
        <position position="8"/>
    </location>
</feature>
<feature type="modified residue" description="Phosphoserine" evidence="1">
    <location>
        <position position="11"/>
    </location>
</feature>
<feature type="modified residue" description="Phosphothreonine" evidence="1 2">
    <location>
        <position position="38"/>
    </location>
</feature>
<feature type="modified residue" description="Phosphothreonine" evidence="7">
    <location>
        <position position="41"/>
    </location>
</feature>
<feature type="modified residue" description="Phosphoserine" evidence="7">
    <location>
        <position position="42"/>
    </location>
</feature>
<feature type="modified residue" description="Phosphoserine" evidence="1">
    <location>
        <position position="189"/>
    </location>
</feature>
<feature type="modified residue" description="Phosphoserine" evidence="1">
    <location>
        <position position="223"/>
    </location>
</feature>
<feature type="modified residue" description="Phosphoserine" evidence="1">
    <location>
        <position position="264"/>
    </location>
</feature>
<feature type="sequence conflict" description="In Ref. 1; AAD00176." evidence="6" ref="1">
    <original>EE</original>
    <variation>AA</variation>
    <location>
        <begin position="17"/>
        <end position="18"/>
    </location>
</feature>
<feature type="sequence conflict" description="In Ref. 1; AAD00176." evidence="6" ref="1">
    <original>E</original>
    <variation>Q</variation>
    <location>
        <position position="21"/>
    </location>
</feature>
<feature type="sequence conflict" description="In Ref. 1; AAD00176." evidence="6" ref="1">
    <original>K</original>
    <variation>T</variation>
    <location>
        <position position="24"/>
    </location>
</feature>
<feature type="sequence conflict" description="In Ref. 1; AAD00176." evidence="6" ref="1">
    <original>K</original>
    <variation>T</variation>
    <location>
        <position position="32"/>
    </location>
</feature>
<feature type="sequence conflict" description="In Ref. 1; AAD00176." evidence="6" ref="1">
    <original>I</original>
    <variation>P</variation>
    <location>
        <position position="60"/>
    </location>
</feature>
<feature type="sequence conflict" description="In Ref. 1; AAD00176." evidence="6" ref="1">
    <original>E</original>
    <variation>S</variation>
    <location>
        <position position="88"/>
    </location>
</feature>
<feature type="sequence conflict" description="In Ref. 1; AAD00176." evidence="6" ref="1">
    <original>AS</original>
    <variation>PA</variation>
    <location>
        <begin position="222"/>
        <end position="223"/>
    </location>
</feature>
<organism>
    <name type="scientific">Mus musculus</name>
    <name type="common">Mouse</name>
    <dbReference type="NCBI Taxonomy" id="10090"/>
    <lineage>
        <taxon>Eukaryota</taxon>
        <taxon>Metazoa</taxon>
        <taxon>Chordata</taxon>
        <taxon>Craniata</taxon>
        <taxon>Vertebrata</taxon>
        <taxon>Euteleostomi</taxon>
        <taxon>Mammalia</taxon>
        <taxon>Eutheria</taxon>
        <taxon>Euarchontoglires</taxon>
        <taxon>Glires</taxon>
        <taxon>Rodentia</taxon>
        <taxon>Myomorpha</taxon>
        <taxon>Muroidea</taxon>
        <taxon>Muridae</taxon>
        <taxon>Murinae</taxon>
        <taxon>Mus</taxon>
        <taxon>Mus</taxon>
    </lineage>
</organism>
<comment type="function">
    <text evidence="2 4">RNA-binding component of the eukaryotic translation initiation factor 3 (eIF-3) complex, which is required for several steps in the initiation of protein synthesis. The eIF-3 complex associates with the 40S ribosome and facilitates the recruitment of eIF-1, eIF-1A, eIF-2:GTP:methionyl-tRNAi and eIF-5 to form the 43S pre-initiation complex (43S PIC). The eIF-3 complex stimulates mRNA recruitment to the 43S PIC and scanning of the mRNA for AUG recognition. The eIF-3 complex is also required for disassembly and recycling of post-termination ribosomal complexes and subsequently prevents premature joining of the 40S and 60S ribosomal subunits prior to initiation. The eIF-3 complex specifically targets and initiates translation of a subset of mRNAs involved in cell proliferation, including cell cycling, differentiation and apoptosis, and uses different modes of RNA stem-loop binding to exert either translational activation or repression. This subunit can bind 18S rRNA.</text>
</comment>
<comment type="subunit">
    <text evidence="2 5">Component of the eukaryotic translation initiation factor 3 (eIF-3) complex, which is composed of 13 subunits: EIF3A, EIF3B, EIF3C, EIF3D, EIF3E, EIF3F, EIF3G, EIF3H, EIF3I, EIF3J, EIF3K, EIF3L and EIF3M. The eIF-3 complex appears to include 3 stable modules: module A is composed of EIF3A, EIF3B, EIF3G and EIF3I; module B is composed of EIF3F, EIF3H, and EIF3M; and module C is composed of EIF3C, EIF3D, EIF3E, EIF3K and EIF3L. EIF3C of module C binds EIF3B of module A and EIF3H of module B, thereby linking the three modules. EIF3J is a labile subunit that binds to the eIF-3 complex via EIF3B. The eIF-3 complex may interact with RPS6KB1 under conditions of nutrient depletion. Mitogenic stimulation may lead to binding and activation of a complex composed of MTOR and RPTOR, leading to phosphorylation and release of RPS6KB1 and binding of EIF4B to eIF-3. Interacts (via C-terminus) with AIFM1 (via N-terminus) (By similarity). Interacts with DHX33; the interaction is independent of RNA (PubMed:26100019).</text>
</comment>
<comment type="subcellular location">
    <subcellularLocation>
        <location evidence="2">Cytoplasm</location>
    </subcellularLocation>
    <subcellularLocation>
        <location evidence="2">Nucleus</location>
    </subcellularLocation>
    <subcellularLocation>
        <location evidence="2">Cytoplasm</location>
        <location evidence="2">Perinuclear region</location>
    </subcellularLocation>
    <text evidence="2">Colocalizes with AIFM1 in the nucleus and perinuclear region.</text>
</comment>
<comment type="PTM">
    <text evidence="2">Phosphorylated. Phosphorylation is enhanced upon serum stimulation.</text>
</comment>
<comment type="similarity">
    <text evidence="2">Belongs to the eIF-3 subunit G family.</text>
</comment>
<gene>
    <name type="primary">Eif3g</name>
    <name type="synonym">Eif3p42</name>
    <name type="synonym">Eif3s4</name>
</gene>
<dbReference type="EMBL" id="U70733">
    <property type="protein sequence ID" value="AAD00176.1"/>
    <property type="molecule type" value="mRNA"/>
</dbReference>
<dbReference type="EMBL" id="AF108214">
    <property type="protein sequence ID" value="AAF14221.1"/>
    <property type="molecule type" value="mRNA"/>
</dbReference>
<dbReference type="EMBL" id="BC008511">
    <property type="protein sequence ID" value="AAH08511.1"/>
    <property type="molecule type" value="mRNA"/>
</dbReference>
<dbReference type="CCDS" id="CCDS40547.1"/>
<dbReference type="RefSeq" id="NP_058572.2">
    <property type="nucleotide sequence ID" value="NM_016876.3"/>
</dbReference>
<dbReference type="SMR" id="Q9Z1D1"/>
<dbReference type="BioGRID" id="207295">
    <property type="interactions" value="54"/>
</dbReference>
<dbReference type="FunCoup" id="Q9Z1D1">
    <property type="interactions" value="3094"/>
</dbReference>
<dbReference type="IntAct" id="Q9Z1D1">
    <property type="interactions" value="7"/>
</dbReference>
<dbReference type="MINT" id="Q9Z1D1"/>
<dbReference type="STRING" id="10090.ENSMUSP00000004206"/>
<dbReference type="GlyGen" id="Q9Z1D1">
    <property type="glycosylation" value="2 sites, 1 N-linked glycan (1 site), 1 O-linked glycan (1 site)"/>
</dbReference>
<dbReference type="iPTMnet" id="Q9Z1D1"/>
<dbReference type="PhosphoSitePlus" id="Q9Z1D1"/>
<dbReference type="SwissPalm" id="Q9Z1D1"/>
<dbReference type="REPRODUCTION-2DPAGE" id="Q9Z1D1"/>
<dbReference type="jPOST" id="Q9Z1D1"/>
<dbReference type="PaxDb" id="10090-ENSMUSP00000004206"/>
<dbReference type="ProteomicsDB" id="275654"/>
<dbReference type="Pumba" id="Q9Z1D1"/>
<dbReference type="Antibodypedia" id="12724">
    <property type="antibodies" value="275 antibodies from 30 providers"/>
</dbReference>
<dbReference type="DNASU" id="53356"/>
<dbReference type="Ensembl" id="ENSMUST00000004206.10">
    <property type="protein sequence ID" value="ENSMUSP00000004206.9"/>
    <property type="gene ID" value="ENSMUSG00000070319.7"/>
</dbReference>
<dbReference type="GeneID" id="53356"/>
<dbReference type="KEGG" id="mmu:53356"/>
<dbReference type="UCSC" id="uc009ojm.1">
    <property type="organism name" value="mouse"/>
</dbReference>
<dbReference type="AGR" id="MGI:1858258"/>
<dbReference type="CTD" id="8666"/>
<dbReference type="MGI" id="MGI:1858258">
    <property type="gene designation" value="Eif3g"/>
</dbReference>
<dbReference type="VEuPathDB" id="HostDB:ENSMUSG00000070319"/>
<dbReference type="eggNOG" id="KOG0122">
    <property type="taxonomic scope" value="Eukaryota"/>
</dbReference>
<dbReference type="GeneTree" id="ENSGT00510000047802"/>
<dbReference type="HOGENOM" id="CLU_034595_0_0_1"/>
<dbReference type="InParanoid" id="Q9Z1D1"/>
<dbReference type="OMA" id="ICQGDHF"/>
<dbReference type="OrthoDB" id="1749473at2759"/>
<dbReference type="PhylomeDB" id="Q9Z1D1"/>
<dbReference type="TreeFam" id="TF101516"/>
<dbReference type="Reactome" id="R-MMU-156827">
    <property type="pathway name" value="L13a-mediated translational silencing of Ceruloplasmin expression"/>
</dbReference>
<dbReference type="Reactome" id="R-MMU-72649">
    <property type="pathway name" value="Translation initiation complex formation"/>
</dbReference>
<dbReference type="Reactome" id="R-MMU-72689">
    <property type="pathway name" value="Formation of a pool of free 40S subunits"/>
</dbReference>
<dbReference type="Reactome" id="R-MMU-72695">
    <property type="pathway name" value="Formation of the ternary complex, and subsequently, the 43S complex"/>
</dbReference>
<dbReference type="Reactome" id="R-MMU-72702">
    <property type="pathway name" value="Ribosomal scanning and start codon recognition"/>
</dbReference>
<dbReference type="Reactome" id="R-MMU-72706">
    <property type="pathway name" value="GTP hydrolysis and joining of the 60S ribosomal subunit"/>
</dbReference>
<dbReference type="BioGRID-ORCS" id="53356">
    <property type="hits" value="30 hits in 115 CRISPR screens"/>
</dbReference>
<dbReference type="ChiTaRS" id="Eif3g">
    <property type="organism name" value="mouse"/>
</dbReference>
<dbReference type="PRO" id="PR:Q9Z1D1"/>
<dbReference type="Proteomes" id="UP000000589">
    <property type="component" value="Chromosome 9"/>
</dbReference>
<dbReference type="RNAct" id="Q9Z1D1">
    <property type="molecule type" value="protein"/>
</dbReference>
<dbReference type="Bgee" id="ENSMUSG00000070319">
    <property type="expression patterns" value="Expressed in dorsal pancreas and 267 other cell types or tissues"/>
</dbReference>
<dbReference type="ExpressionAtlas" id="Q9Z1D1">
    <property type="expression patterns" value="baseline and differential"/>
</dbReference>
<dbReference type="GO" id="GO:0005829">
    <property type="term" value="C:cytosol"/>
    <property type="evidence" value="ECO:0007669"/>
    <property type="project" value="Ensembl"/>
</dbReference>
<dbReference type="GO" id="GO:0016282">
    <property type="term" value="C:eukaryotic 43S preinitiation complex"/>
    <property type="evidence" value="ECO:0007669"/>
    <property type="project" value="UniProtKB-UniRule"/>
</dbReference>
<dbReference type="GO" id="GO:0033290">
    <property type="term" value="C:eukaryotic 48S preinitiation complex"/>
    <property type="evidence" value="ECO:0007669"/>
    <property type="project" value="UniProtKB-UniRule"/>
</dbReference>
<dbReference type="GO" id="GO:0005852">
    <property type="term" value="C:eukaryotic translation initiation factor 3 complex"/>
    <property type="evidence" value="ECO:0000314"/>
    <property type="project" value="UniProtKB"/>
</dbReference>
<dbReference type="GO" id="GO:0005634">
    <property type="term" value="C:nucleus"/>
    <property type="evidence" value="ECO:0007669"/>
    <property type="project" value="UniProtKB-SubCell"/>
</dbReference>
<dbReference type="GO" id="GO:0048471">
    <property type="term" value="C:perinuclear region of cytoplasm"/>
    <property type="evidence" value="ECO:0007669"/>
    <property type="project" value="UniProtKB-SubCell"/>
</dbReference>
<dbReference type="GO" id="GO:0003723">
    <property type="term" value="F:RNA binding"/>
    <property type="evidence" value="ECO:0007669"/>
    <property type="project" value="UniProtKB-UniRule"/>
</dbReference>
<dbReference type="GO" id="GO:0003743">
    <property type="term" value="F:translation initiation factor activity"/>
    <property type="evidence" value="ECO:0007669"/>
    <property type="project" value="UniProtKB-UniRule"/>
</dbReference>
<dbReference type="GO" id="GO:0001732">
    <property type="term" value="P:formation of cytoplasmic translation initiation complex"/>
    <property type="evidence" value="ECO:0007669"/>
    <property type="project" value="UniProtKB-UniRule"/>
</dbReference>
<dbReference type="GO" id="GO:0006413">
    <property type="term" value="P:translational initiation"/>
    <property type="evidence" value="ECO:0000314"/>
    <property type="project" value="UniProtKB"/>
</dbReference>
<dbReference type="GO" id="GO:0075525">
    <property type="term" value="P:viral translational termination-reinitiation"/>
    <property type="evidence" value="ECO:0007669"/>
    <property type="project" value="Ensembl"/>
</dbReference>
<dbReference type="CDD" id="cd12933">
    <property type="entry name" value="eIF3G"/>
    <property type="match status" value="1"/>
</dbReference>
<dbReference type="CDD" id="cd12408">
    <property type="entry name" value="RRM_eIF3G_like"/>
    <property type="match status" value="1"/>
</dbReference>
<dbReference type="FunFam" id="3.30.70.330:FF:000194">
    <property type="entry name" value="Eukaryotic translation initiation factor 3 subunit G"/>
    <property type="match status" value="1"/>
</dbReference>
<dbReference type="Gene3D" id="3.30.70.330">
    <property type="match status" value="1"/>
</dbReference>
<dbReference type="HAMAP" id="MF_03006">
    <property type="entry name" value="eIF3g"/>
    <property type="match status" value="1"/>
</dbReference>
<dbReference type="InterPro" id="IPR017334">
    <property type="entry name" value="eIF3_g"/>
</dbReference>
<dbReference type="InterPro" id="IPR024675">
    <property type="entry name" value="eIF3g_N"/>
</dbReference>
<dbReference type="InterPro" id="IPR034240">
    <property type="entry name" value="eIF3G_RRM"/>
</dbReference>
<dbReference type="InterPro" id="IPR012677">
    <property type="entry name" value="Nucleotide-bd_a/b_plait_sf"/>
</dbReference>
<dbReference type="InterPro" id="IPR035979">
    <property type="entry name" value="RBD_domain_sf"/>
</dbReference>
<dbReference type="InterPro" id="IPR000504">
    <property type="entry name" value="RRM_dom"/>
</dbReference>
<dbReference type="PANTHER" id="PTHR10352">
    <property type="entry name" value="EUKARYOTIC TRANSLATION INITIATION FACTOR 3 SUBUNIT G"/>
    <property type="match status" value="1"/>
</dbReference>
<dbReference type="Pfam" id="PF12353">
    <property type="entry name" value="eIF3g"/>
    <property type="match status" value="1"/>
</dbReference>
<dbReference type="Pfam" id="PF00076">
    <property type="entry name" value="RRM_1"/>
    <property type="match status" value="1"/>
</dbReference>
<dbReference type="PIRSF" id="PIRSF037949">
    <property type="entry name" value="Transl_init_eIF-3_RNA-bind"/>
    <property type="match status" value="1"/>
</dbReference>
<dbReference type="SMART" id="SM00360">
    <property type="entry name" value="RRM"/>
    <property type="match status" value="1"/>
</dbReference>
<dbReference type="SUPFAM" id="SSF54928">
    <property type="entry name" value="RNA-binding domain, RBD"/>
    <property type="match status" value="1"/>
</dbReference>
<dbReference type="PROSITE" id="PS50102">
    <property type="entry name" value="RRM"/>
    <property type="match status" value="1"/>
</dbReference>
<name>EIF3G_MOUSE</name>